<evidence type="ECO:0000250" key="1">
    <source>
        <dbReference type="UniProtKB" id="P0C7P5"/>
    </source>
</evidence>
<evidence type="ECO:0000250" key="2">
    <source>
        <dbReference type="UniProtKB" id="P0DMD6"/>
    </source>
</evidence>
<evidence type="ECO:0000250" key="3">
    <source>
        <dbReference type="UniProtKB" id="Q27J49"/>
    </source>
</evidence>
<evidence type="ECO:0000255" key="4"/>
<evidence type="ECO:0000256" key="5">
    <source>
        <dbReference type="SAM" id="MobiDB-lite"/>
    </source>
</evidence>
<evidence type="ECO:0000305" key="6"/>
<evidence type="ECO:0000305" key="7">
    <source ref="1"/>
</evidence>
<evidence type="ECO:0000312" key="8">
    <source>
        <dbReference type="EMBL" id="BAI59771.1"/>
    </source>
</evidence>
<feature type="signal peptide" evidence="4">
    <location>
        <begin position="1"/>
        <end position="22"/>
    </location>
</feature>
<feature type="propeptide" id="PRO_0000403803" evidence="6">
    <location>
        <begin position="23"/>
        <end position="139"/>
    </location>
</feature>
<feature type="peptide" id="PRO_0000403804" description="C-type natriuretic peptide" evidence="3">
    <location>
        <begin position="140"/>
        <end position="161"/>
    </location>
</feature>
<feature type="region of interest" description="Disordered" evidence="5">
    <location>
        <begin position="19"/>
        <end position="135"/>
    </location>
</feature>
<feature type="compositionally biased region" description="Low complexity" evidence="5">
    <location>
        <begin position="29"/>
        <end position="60"/>
    </location>
</feature>
<feature type="compositionally biased region" description="Low complexity" evidence="5">
    <location>
        <begin position="76"/>
        <end position="93"/>
    </location>
</feature>
<feature type="compositionally biased region" description="Basic and acidic residues" evidence="5">
    <location>
        <begin position="94"/>
        <end position="104"/>
    </location>
</feature>
<feature type="compositionally biased region" description="Gly residues" evidence="5">
    <location>
        <begin position="120"/>
        <end position="130"/>
    </location>
</feature>
<feature type="disulfide bond" evidence="2">
    <location>
        <begin position="145"/>
        <end position="161"/>
    </location>
</feature>
<dbReference type="EMBL" id="AB539054">
    <property type="protein sequence ID" value="BAI59771.1"/>
    <property type="molecule type" value="mRNA"/>
</dbReference>
<dbReference type="GO" id="GO:0005576">
    <property type="term" value="C:extracellular region"/>
    <property type="evidence" value="ECO:0007669"/>
    <property type="project" value="UniProtKB-SubCell"/>
</dbReference>
<dbReference type="GO" id="GO:0005179">
    <property type="term" value="F:hormone activity"/>
    <property type="evidence" value="ECO:0007669"/>
    <property type="project" value="InterPro"/>
</dbReference>
<dbReference type="GO" id="GO:0090729">
    <property type="term" value="F:toxin activity"/>
    <property type="evidence" value="ECO:0007669"/>
    <property type="project" value="UniProtKB-KW"/>
</dbReference>
<dbReference type="GO" id="GO:0006182">
    <property type="term" value="P:cGMP biosynthetic process"/>
    <property type="evidence" value="ECO:0007669"/>
    <property type="project" value="TreeGrafter"/>
</dbReference>
<dbReference type="GO" id="GO:0007168">
    <property type="term" value="P:receptor guanylyl cyclase signaling pathway"/>
    <property type="evidence" value="ECO:0007669"/>
    <property type="project" value="TreeGrafter"/>
</dbReference>
<dbReference type="GO" id="GO:0008217">
    <property type="term" value="P:regulation of blood pressure"/>
    <property type="evidence" value="ECO:0007669"/>
    <property type="project" value="UniProtKB-KW"/>
</dbReference>
<dbReference type="GO" id="GO:0042311">
    <property type="term" value="P:vasodilation"/>
    <property type="evidence" value="ECO:0007669"/>
    <property type="project" value="UniProtKB-KW"/>
</dbReference>
<dbReference type="InterPro" id="IPR000663">
    <property type="entry name" value="Natr_peptide"/>
</dbReference>
<dbReference type="InterPro" id="IPR030480">
    <property type="entry name" value="Natr_peptide_CS"/>
</dbReference>
<dbReference type="PANTHER" id="PTHR12167">
    <property type="entry name" value="C-TYPE NATRIURETIC PEPTIDE"/>
    <property type="match status" value="1"/>
</dbReference>
<dbReference type="PANTHER" id="PTHR12167:SF2">
    <property type="entry name" value="C-TYPE NATRIURETIC PEPTIDE"/>
    <property type="match status" value="1"/>
</dbReference>
<dbReference type="Pfam" id="PF00212">
    <property type="entry name" value="ANP"/>
    <property type="match status" value="1"/>
</dbReference>
<dbReference type="PRINTS" id="PR00710">
    <property type="entry name" value="NATPEPTIDES"/>
</dbReference>
<dbReference type="SMART" id="SM00183">
    <property type="entry name" value="NAT_PEP"/>
    <property type="match status" value="1"/>
</dbReference>
<dbReference type="PROSITE" id="PS00263">
    <property type="entry name" value="NATRIURETIC_PEPTIDE"/>
    <property type="match status" value="1"/>
</dbReference>
<comment type="function">
    <text evidence="1">Snake venom natriuretic peptide that has a vasorelaxant activity in rat aortic strips and a diuretic potency in anesthetized rats (By similarity). May act by activating natriuretic receptors (NPR1 and/or NPR2).</text>
</comment>
<comment type="subcellular location">
    <subcellularLocation>
        <location evidence="7">Secreted</location>
    </subcellularLocation>
</comment>
<comment type="tissue specificity">
    <text evidence="7">Expressed by the venom gland.</text>
</comment>
<comment type="similarity">
    <text evidence="6">Belongs to the natriuretic peptide family.</text>
</comment>
<protein>
    <recommendedName>
        <fullName evidence="8">C-type natriuretic peptide</fullName>
        <shortName evidence="8">CNP</shortName>
    </recommendedName>
</protein>
<proteinExistence type="evidence at transcript level"/>
<sequence length="161" mass="15932">MFASRLAALGLLLLALVLDGKPAPPPQPLRKAPAGGTTALQRQLTEQQQQQQQAEGSSGPAAGGGGGRSGSKTANAAPTAPKSKGAAASAASRLLRDLRPDGKQSRAAWGRMVHPEHHAGGGGGGGGGGSRRLKGLPKKGLGSGCFGLKLDRIGSMSGLGC</sequence>
<reference key="1">
    <citation type="submission" date="2009-12" db="EMBL/GenBank/DDBJ databases">
        <title>Transcriptomic analysis of Duvernoy's gland of Colubridae Yamakagashi snake (Rhabdophis tigrinus tigrinus): exploring unidentified proteins and peptides.</title>
        <authorList>
            <person name="Fujisawa D."/>
            <person name="Yamazaki Y."/>
            <person name="Morita T."/>
        </authorList>
    </citation>
    <scope>NUCLEOTIDE SEQUENCE [MRNA]</scope>
    <source>
        <tissue>Venom gland</tissue>
    </source>
</reference>
<accession>D1MZV3</accession>
<name>VNP_RHATT</name>
<keyword id="KW-0165">Cleavage on pair of basic residues</keyword>
<keyword id="KW-1015">Disulfide bond</keyword>
<keyword id="KW-0382">Hypotensive agent</keyword>
<keyword id="KW-0964">Secreted</keyword>
<keyword id="KW-0732">Signal</keyword>
<keyword id="KW-0800">Toxin</keyword>
<keyword id="KW-0838">Vasoactive</keyword>
<keyword id="KW-0840">Vasodilator</keyword>
<organism>
    <name type="scientific">Rhabdophis tigrinus tigrinus</name>
    <name type="common">Tiger keelback snake</name>
    <dbReference type="NCBI Taxonomy" id="193080"/>
    <lineage>
        <taxon>Eukaryota</taxon>
        <taxon>Metazoa</taxon>
        <taxon>Chordata</taxon>
        <taxon>Craniata</taxon>
        <taxon>Vertebrata</taxon>
        <taxon>Euteleostomi</taxon>
        <taxon>Lepidosauria</taxon>
        <taxon>Squamata</taxon>
        <taxon>Bifurcata</taxon>
        <taxon>Unidentata</taxon>
        <taxon>Episquamata</taxon>
        <taxon>Toxicofera</taxon>
        <taxon>Serpentes</taxon>
        <taxon>Colubroidea</taxon>
        <taxon>Colubridae</taxon>
        <taxon>Natricinae</taxon>
        <taxon>Rhabdophis</taxon>
    </lineage>
</organism>